<dbReference type="EMBL" id="U00096">
    <property type="protein sequence ID" value="AAC73961.2"/>
    <property type="molecule type" value="Genomic_DNA"/>
</dbReference>
<dbReference type="EMBL" id="AP009048">
    <property type="protein sequence ID" value="BAA35588.1"/>
    <property type="molecule type" value="Genomic_DNA"/>
</dbReference>
<dbReference type="RefSeq" id="NP_415395.2">
    <property type="nucleotide sequence ID" value="NC_000913.3"/>
</dbReference>
<dbReference type="RefSeq" id="WP_000491142.1">
    <property type="nucleotide sequence ID" value="NZ_STEB01000019.1"/>
</dbReference>
<dbReference type="BioGRID" id="4259999">
    <property type="interactions" value="17"/>
</dbReference>
<dbReference type="BioGRID" id="851475">
    <property type="interactions" value="1"/>
</dbReference>
<dbReference type="DIP" id="DIP-11447N"/>
<dbReference type="FunCoup" id="P75826">
    <property type="interactions" value="55"/>
</dbReference>
<dbReference type="IntAct" id="P75826">
    <property type="interactions" value="2"/>
</dbReference>
<dbReference type="STRING" id="511145.b0874"/>
<dbReference type="TCDB" id="2.A.124.1.1">
    <property type="family name" value="the lysine exporter (lyso) family"/>
</dbReference>
<dbReference type="PaxDb" id="511145-b0874"/>
<dbReference type="EnsemblBacteria" id="AAC73961">
    <property type="protein sequence ID" value="AAC73961"/>
    <property type="gene ID" value="b0874"/>
</dbReference>
<dbReference type="GeneID" id="93776547"/>
<dbReference type="GeneID" id="947142"/>
<dbReference type="KEGG" id="ecj:JW0858"/>
<dbReference type="KEGG" id="eco:b0874"/>
<dbReference type="KEGG" id="ecoc:C3026_05430"/>
<dbReference type="PATRIC" id="fig|1411691.4.peg.1403"/>
<dbReference type="EchoBASE" id="EB3200"/>
<dbReference type="eggNOG" id="COG2431">
    <property type="taxonomic scope" value="Bacteria"/>
</dbReference>
<dbReference type="HOGENOM" id="CLU_045681_1_0_6"/>
<dbReference type="InParanoid" id="P75826"/>
<dbReference type="OMA" id="IFITEYK"/>
<dbReference type="OrthoDB" id="5451742at2"/>
<dbReference type="PhylomeDB" id="P75826"/>
<dbReference type="BioCyc" id="EcoCyc:G6458-MONOMER"/>
<dbReference type="BioCyc" id="MetaCyc:G6458-MONOMER"/>
<dbReference type="PRO" id="PR:P75826"/>
<dbReference type="Proteomes" id="UP000000625">
    <property type="component" value="Chromosome"/>
</dbReference>
<dbReference type="GO" id="GO:0005886">
    <property type="term" value="C:plasma membrane"/>
    <property type="evidence" value="ECO:0000314"/>
    <property type="project" value="EcoCyc"/>
</dbReference>
<dbReference type="GO" id="GO:0015661">
    <property type="term" value="F:L-lysine efflux transmembrane transporter activity"/>
    <property type="evidence" value="ECO:0000315"/>
    <property type="project" value="EcoCyc"/>
</dbReference>
<dbReference type="GO" id="GO:1903401">
    <property type="term" value="P:L-lysine transmembrane transport"/>
    <property type="evidence" value="ECO:0000315"/>
    <property type="project" value="EcoCyc"/>
</dbReference>
<dbReference type="InterPro" id="IPR005642">
    <property type="entry name" value="LysO"/>
</dbReference>
<dbReference type="PANTHER" id="PTHR35804">
    <property type="entry name" value="LYSINE EXPORTER LYSO"/>
    <property type="match status" value="1"/>
</dbReference>
<dbReference type="PANTHER" id="PTHR35804:SF1">
    <property type="entry name" value="LYSINE EXPORTER LYSO"/>
    <property type="match status" value="1"/>
</dbReference>
<dbReference type="Pfam" id="PF03956">
    <property type="entry name" value="Lys_export"/>
    <property type="match status" value="1"/>
</dbReference>
<protein>
    <recommendedName>
        <fullName evidence="4">Lysine exporter LysO</fullName>
    </recommendedName>
    <alternativeName>
        <fullName evidence="3">Lys outward permease</fullName>
    </alternativeName>
</protein>
<proteinExistence type="evidence at transcript level"/>
<sequence length="299" mass="32340">MFSGLLIILVPLIVGYLIPLRQQAALKVINQLLSWMVYLILFFMGISLAFLDNLASNLLAILHYSAVSITVILLCNIAALMWLERGLPWRNHHQQEKLPSRIAMALESLKLCGVVVIGFAIGLSGLAFLQHATEASEYTLILLLFLVGIQLRNNGMTLKQIVLNRRGMIVAVVVVVSSLIGGLINAFILDLPINTALAMASGFGWYSLSGILLTESFGPVIGSAAFFNDLARELIAIMLIPGLIRRSRSTALGLCGATSMDFTLPVLQRTGGLDMVPAAIVHGFILSLLVPILIAFFSA</sequence>
<gene>
    <name evidence="3" type="primary">lysO</name>
    <name type="synonym">ybjE</name>
    <name type="ordered locus">b0874</name>
    <name type="ordered locus">JW0858</name>
</gene>
<feature type="chain" id="PRO_0000168737" description="Lysine exporter LysO">
    <location>
        <begin position="1"/>
        <end position="299"/>
    </location>
</feature>
<feature type="transmembrane region" description="Helical" evidence="1">
    <location>
        <begin position="1"/>
        <end position="21"/>
    </location>
</feature>
<feature type="transmembrane region" description="Helical" evidence="1">
    <location>
        <begin position="31"/>
        <end position="51"/>
    </location>
</feature>
<feature type="transmembrane region" description="Helical" evidence="1">
    <location>
        <begin position="58"/>
        <end position="78"/>
    </location>
</feature>
<feature type="transmembrane region" description="Helical" evidence="1">
    <location>
        <begin position="109"/>
        <end position="129"/>
    </location>
</feature>
<feature type="transmembrane region" description="Helical" evidence="1">
    <location>
        <begin position="131"/>
        <end position="151"/>
    </location>
</feature>
<feature type="transmembrane region" description="Helical" evidence="1">
    <location>
        <begin position="169"/>
        <end position="189"/>
    </location>
</feature>
<feature type="transmembrane region" description="Helical" evidence="1">
    <location>
        <begin position="207"/>
        <end position="227"/>
    </location>
</feature>
<feature type="transmembrane region" description="Helical" evidence="1">
    <location>
        <begin position="277"/>
        <end position="297"/>
    </location>
</feature>
<keyword id="KW-0029">Amino-acid transport</keyword>
<keyword id="KW-0997">Cell inner membrane</keyword>
<keyword id="KW-1003">Cell membrane</keyword>
<keyword id="KW-0472">Membrane</keyword>
<keyword id="KW-1185">Reference proteome</keyword>
<keyword id="KW-0812">Transmembrane</keyword>
<keyword id="KW-1133">Transmembrane helix</keyword>
<keyword id="KW-0813">Transport</keyword>
<name>LYSO_ECOLI</name>
<evidence type="ECO:0000255" key="1"/>
<evidence type="ECO:0000269" key="2">
    <source>
    </source>
</evidence>
<evidence type="ECO:0000303" key="3">
    <source>
    </source>
</evidence>
<evidence type="ECO:0000305" key="4"/>
<reference key="1">
    <citation type="journal article" date="1996" name="DNA Res.">
        <title>A 718-kb DNA sequence of the Escherichia coli K-12 genome corresponding to the 12.7-28.0 min region on the linkage map.</title>
        <authorList>
            <person name="Oshima T."/>
            <person name="Aiba H."/>
            <person name="Baba T."/>
            <person name="Fujita K."/>
            <person name="Hayashi K."/>
            <person name="Honjo A."/>
            <person name="Ikemoto K."/>
            <person name="Inada T."/>
            <person name="Itoh T."/>
            <person name="Kajihara M."/>
            <person name="Kanai K."/>
            <person name="Kashimoto K."/>
            <person name="Kimura S."/>
            <person name="Kitagawa M."/>
            <person name="Makino K."/>
            <person name="Masuda S."/>
            <person name="Miki T."/>
            <person name="Mizobuchi K."/>
            <person name="Mori H."/>
            <person name="Motomura K."/>
            <person name="Nakamura Y."/>
            <person name="Nashimoto H."/>
            <person name="Nishio Y."/>
            <person name="Saito N."/>
            <person name="Sampei G."/>
            <person name="Seki Y."/>
            <person name="Tagami H."/>
            <person name="Takemoto K."/>
            <person name="Wada C."/>
            <person name="Yamamoto Y."/>
            <person name="Yano M."/>
            <person name="Horiuchi T."/>
        </authorList>
    </citation>
    <scope>NUCLEOTIDE SEQUENCE [LARGE SCALE GENOMIC DNA]</scope>
    <source>
        <strain>K12 / W3110 / ATCC 27325 / DSM 5911</strain>
    </source>
</reference>
<reference key="2">
    <citation type="journal article" date="1997" name="Science">
        <title>The complete genome sequence of Escherichia coli K-12.</title>
        <authorList>
            <person name="Blattner F.R."/>
            <person name="Plunkett G. III"/>
            <person name="Bloch C.A."/>
            <person name="Perna N.T."/>
            <person name="Burland V."/>
            <person name="Riley M."/>
            <person name="Collado-Vides J."/>
            <person name="Glasner J.D."/>
            <person name="Rode C.K."/>
            <person name="Mayhew G.F."/>
            <person name="Gregor J."/>
            <person name="Davis N.W."/>
            <person name="Kirkpatrick H.A."/>
            <person name="Goeden M.A."/>
            <person name="Rose D.J."/>
            <person name="Mau B."/>
            <person name="Shao Y."/>
        </authorList>
    </citation>
    <scope>NUCLEOTIDE SEQUENCE [LARGE SCALE GENOMIC DNA]</scope>
    <source>
        <strain>K12 / MG1655 / ATCC 47076</strain>
    </source>
</reference>
<reference key="3">
    <citation type="journal article" date="2006" name="Mol. Syst. Biol.">
        <title>Highly accurate genome sequences of Escherichia coli K-12 strains MG1655 and W3110.</title>
        <authorList>
            <person name="Hayashi K."/>
            <person name="Morooka N."/>
            <person name="Yamamoto Y."/>
            <person name="Fujita K."/>
            <person name="Isono K."/>
            <person name="Choi S."/>
            <person name="Ohtsubo E."/>
            <person name="Baba T."/>
            <person name="Wanner B.L."/>
            <person name="Mori H."/>
            <person name="Horiuchi T."/>
        </authorList>
    </citation>
    <scope>NUCLEOTIDE SEQUENCE [LARGE SCALE GENOMIC DNA]</scope>
    <source>
        <strain>K12 / W3110 / ATCC 27325 / DSM 5911</strain>
    </source>
</reference>
<reference key="4">
    <citation type="journal article" date="2015" name="J. Bacteriol.">
        <title>Distinct paths for basic amino acid export in Escherichia coli: YbjE (LysO) mediates export of L-lysine.</title>
        <authorList>
            <person name="Pathania A."/>
            <person name="Sardesai A.A."/>
        </authorList>
    </citation>
    <scope>FUNCTION</scope>
    <scope>INDUCTION</scope>
    <scope>DISRUPTION PHENOTYPE</scope>
    <source>
        <strain>K12 / MC4100 / ATCC 35695 / DSM 6574</strain>
    </source>
</reference>
<organism>
    <name type="scientific">Escherichia coli (strain K12)</name>
    <dbReference type="NCBI Taxonomy" id="83333"/>
    <lineage>
        <taxon>Bacteria</taxon>
        <taxon>Pseudomonadati</taxon>
        <taxon>Pseudomonadota</taxon>
        <taxon>Gammaproteobacteria</taxon>
        <taxon>Enterobacterales</taxon>
        <taxon>Enterobacteriaceae</taxon>
        <taxon>Escherichia</taxon>
    </lineage>
</organism>
<comment type="function">
    <text evidence="2">Mediates export of lysine.</text>
</comment>
<comment type="subcellular location">
    <subcellularLocation>
        <location evidence="4">Cell inner membrane</location>
        <topology evidence="1">Multi-pass membrane protein</topology>
    </subcellularLocation>
</comment>
<comment type="induction">
    <text evidence="2">Repressed by arginine, via the ArgR repressor.</text>
</comment>
<comment type="disruption phenotype">
    <text evidence="2">Null mutant is hypersensitive to the lysine antimetabolite thialysine.</text>
</comment>
<comment type="similarity">
    <text evidence="4">Belongs to the LysO family.</text>
</comment>
<accession>P75826</accession>
<accession>Q9R2W1</accession>